<accession>Q7ZUX6</accession>
<proteinExistence type="evidence at transcript level"/>
<feature type="chain" id="PRO_0000248579" description="Deoxyhypusine hydroxylase">
    <location>
        <begin position="1"/>
        <end position="305"/>
    </location>
</feature>
<feature type="repeat" description="HEAT-like PBS-type 1">
    <location>
        <begin position="54"/>
        <end position="80"/>
    </location>
</feature>
<feature type="repeat" description="HEAT-like PBS-type 2">
    <location>
        <begin position="87"/>
        <end position="113"/>
    </location>
</feature>
<feature type="repeat" description="HEAT-like PBS-type 3">
    <location>
        <begin position="178"/>
        <end position="204"/>
    </location>
</feature>
<feature type="repeat" description="HEAT-like PBS-type 4">
    <location>
        <begin position="209"/>
        <end position="235"/>
    </location>
</feature>
<feature type="repeat" description="HEAT-like PBS-type 5">
    <location>
        <begin position="242"/>
        <end position="268"/>
    </location>
</feature>
<feature type="region of interest" description="Disordered" evidence="4">
    <location>
        <begin position="137"/>
        <end position="160"/>
    </location>
</feature>
<feature type="binding site" evidence="2 3">
    <location>
        <position position="56"/>
    </location>
    <ligand>
        <name>Fe cation</name>
        <dbReference type="ChEBI" id="CHEBI:24875"/>
        <label>1</label>
    </ligand>
</feature>
<feature type="binding site" evidence="2 3">
    <location>
        <position position="89"/>
    </location>
    <ligand>
        <name>Fe cation</name>
        <dbReference type="ChEBI" id="CHEBI:24875"/>
        <label>2</label>
    </ligand>
</feature>
<feature type="binding site" evidence="2 3">
    <location>
        <position position="90"/>
    </location>
    <ligand>
        <name>Fe cation</name>
        <dbReference type="ChEBI" id="CHEBI:24875"/>
        <label>2</label>
    </ligand>
</feature>
<feature type="binding site" evidence="2 3">
    <location>
        <position position="211"/>
    </location>
    <ligand>
        <name>Fe cation</name>
        <dbReference type="ChEBI" id="CHEBI:24875"/>
        <label>2</label>
    </ligand>
</feature>
<feature type="binding site" evidence="2 3">
    <location>
        <position position="244"/>
    </location>
    <ligand>
        <name>Fe cation</name>
        <dbReference type="ChEBI" id="CHEBI:24875"/>
        <label>1</label>
    </ligand>
</feature>
<feature type="binding site" evidence="2 3">
    <location>
        <position position="245"/>
    </location>
    <ligand>
        <name>Fe cation</name>
        <dbReference type="ChEBI" id="CHEBI:24875"/>
        <label>1</label>
    </ligand>
</feature>
<name>DOHH_DANRE</name>
<keyword id="KW-0386">Hypusine biosynthesis</keyword>
<keyword id="KW-0408">Iron</keyword>
<keyword id="KW-0479">Metal-binding</keyword>
<keyword id="KW-0503">Monooxygenase</keyword>
<keyword id="KW-0560">Oxidoreductase</keyword>
<keyword id="KW-1185">Reference proteome</keyword>
<keyword id="KW-0677">Repeat</keyword>
<sequence>MANDKDIAAVGSILVNTKQDLTTRFRALFTLRNLGGAEAVKWISEAFVDESALLKHELAYCLGQMQDESAIPTLEAVLKDTNQEPMVRHEAGEALGAIGNPKVLELLKKYAEDPVIEVAETCQLAVKRLEWLMNGGEQTKDGTDENPYCSVDPAPPAQRKSVPELRTQLLDETLPLFDRYRAMFALRNLGTEEAVLALGDGLQCSSALFRHEIGYVLGQIQHEASIPQLQAALEKMDENAMVRHECAEALGSIGKEPCVQILERYRKDQERVVKESCEVALDMLEYENSSQFQYADGLLRLQSAH</sequence>
<dbReference type="EC" id="1.14.99.29" evidence="2 3"/>
<dbReference type="EMBL" id="BC046086">
    <property type="protein sequence ID" value="AAH46086.1"/>
    <property type="molecule type" value="mRNA"/>
</dbReference>
<dbReference type="RefSeq" id="NP_955857.1">
    <property type="nucleotide sequence ID" value="NM_199563.2"/>
</dbReference>
<dbReference type="SMR" id="Q7ZUX6"/>
<dbReference type="FunCoup" id="Q7ZUX6">
    <property type="interactions" value="2088"/>
</dbReference>
<dbReference type="STRING" id="7955.ENSDARP00000011317"/>
<dbReference type="PaxDb" id="7955-ENSDARP00000011317"/>
<dbReference type="GeneID" id="321732"/>
<dbReference type="KEGG" id="dre:321732"/>
<dbReference type="AGR" id="ZFIN:ZDB-GENE-030131-451"/>
<dbReference type="CTD" id="83475"/>
<dbReference type="ZFIN" id="ZDB-GENE-030131-451">
    <property type="gene designation" value="dohh"/>
</dbReference>
<dbReference type="eggNOG" id="KOG0567">
    <property type="taxonomic scope" value="Eukaryota"/>
</dbReference>
<dbReference type="InParanoid" id="Q7ZUX6"/>
<dbReference type="OrthoDB" id="421002at2759"/>
<dbReference type="PhylomeDB" id="Q7ZUX6"/>
<dbReference type="Reactome" id="R-DRE-204626">
    <property type="pathway name" value="Hypusine synthesis from eIF5A-lysine"/>
</dbReference>
<dbReference type="UniPathway" id="UPA00354"/>
<dbReference type="PRO" id="PR:Q7ZUX6"/>
<dbReference type="Proteomes" id="UP000000437">
    <property type="component" value="Alternate scaffold 8"/>
</dbReference>
<dbReference type="Proteomes" id="UP000000437">
    <property type="component" value="Chromosome 8"/>
</dbReference>
<dbReference type="GO" id="GO:0019135">
    <property type="term" value="F:deoxyhypusine monooxygenase activity"/>
    <property type="evidence" value="ECO:0000250"/>
    <property type="project" value="UniProtKB"/>
</dbReference>
<dbReference type="GO" id="GO:0005506">
    <property type="term" value="F:iron ion binding"/>
    <property type="evidence" value="ECO:0000250"/>
    <property type="project" value="UniProtKB"/>
</dbReference>
<dbReference type="GO" id="GO:0008612">
    <property type="term" value="P:peptidyl-lysine modification to peptidyl-hypusine"/>
    <property type="evidence" value="ECO:0000250"/>
    <property type="project" value="UniProtKB"/>
</dbReference>
<dbReference type="FunFam" id="1.25.10.10:FF:000099">
    <property type="entry name" value="Deoxyhypusine hydroxylase"/>
    <property type="match status" value="2"/>
</dbReference>
<dbReference type="Gene3D" id="1.25.10.10">
    <property type="entry name" value="Leucine-rich Repeat Variant"/>
    <property type="match status" value="2"/>
</dbReference>
<dbReference type="HAMAP" id="MF_03101">
    <property type="entry name" value="Deoxyhypusine_hydroxylase"/>
    <property type="match status" value="1"/>
</dbReference>
<dbReference type="InterPro" id="IPR011989">
    <property type="entry name" value="ARM-like"/>
</dbReference>
<dbReference type="InterPro" id="IPR016024">
    <property type="entry name" value="ARM-type_fold"/>
</dbReference>
<dbReference type="InterPro" id="IPR027517">
    <property type="entry name" value="Deoxyhypusine_hydroxylase"/>
</dbReference>
<dbReference type="InterPro" id="IPR004155">
    <property type="entry name" value="PBS_lyase_HEAT"/>
</dbReference>
<dbReference type="PANTHER" id="PTHR12697:SF5">
    <property type="entry name" value="DEOXYHYPUSINE HYDROXYLASE"/>
    <property type="match status" value="1"/>
</dbReference>
<dbReference type="PANTHER" id="PTHR12697">
    <property type="entry name" value="PBS LYASE HEAT-LIKE PROTEIN"/>
    <property type="match status" value="1"/>
</dbReference>
<dbReference type="Pfam" id="PF13646">
    <property type="entry name" value="HEAT_2"/>
    <property type="match status" value="2"/>
</dbReference>
<dbReference type="SMART" id="SM00567">
    <property type="entry name" value="EZ_HEAT"/>
    <property type="match status" value="6"/>
</dbReference>
<dbReference type="SUPFAM" id="SSF48371">
    <property type="entry name" value="ARM repeat"/>
    <property type="match status" value="1"/>
</dbReference>
<comment type="function">
    <text evidence="1 3">Catalyzes the hydroxylation of the N(6)-(4-aminobutyl)-L-lysine intermediate produced by deoxyhypusine synthase/DHPS on a critical lysine of the eukaryotic translation initiation factor 5A/eIF-5A. This is the second step of the post-translational modification of that lysine into an unusual amino acid residue named hypusine. Hypusination is unique to mature eIF-5A factor and is essential for its function.</text>
</comment>
<comment type="catalytic activity">
    <reaction evidence="2 3">
        <text>[eIF5A protein]-deoxyhypusine + AH2 + O2 = [eIF5A protein]-hypusine + A + H2O</text>
        <dbReference type="Rhea" id="RHEA:14101"/>
        <dbReference type="Rhea" id="RHEA-COMP:10144"/>
        <dbReference type="Rhea" id="RHEA-COMP:12592"/>
        <dbReference type="ChEBI" id="CHEBI:13193"/>
        <dbReference type="ChEBI" id="CHEBI:15377"/>
        <dbReference type="ChEBI" id="CHEBI:15379"/>
        <dbReference type="ChEBI" id="CHEBI:17499"/>
        <dbReference type="ChEBI" id="CHEBI:82657"/>
        <dbReference type="ChEBI" id="CHEBI:91175"/>
        <dbReference type="EC" id="1.14.99.29"/>
    </reaction>
</comment>
<comment type="cofactor">
    <cofactor evidence="2 3">
        <name>Fe(2+)</name>
        <dbReference type="ChEBI" id="CHEBI:29033"/>
    </cofactor>
    <text evidence="2 3">Binds 2 Fe(2+) ions per subunit.</text>
</comment>
<comment type="pathway">
    <text evidence="2 3">Protein modification; eIF5A hypusination.</text>
</comment>
<comment type="similarity">
    <text evidence="3">Belongs to the deoxyhypusine hydroxylase family.</text>
</comment>
<reference key="1">
    <citation type="submission" date="2003-01" db="EMBL/GenBank/DDBJ databases">
        <authorList>
            <consortium name="NIH - Zebrafish Gene Collection (ZGC) project"/>
        </authorList>
    </citation>
    <scope>NUCLEOTIDE SEQUENCE [LARGE SCALE MRNA]</scope>
</reference>
<evidence type="ECO:0000250" key="1">
    <source>
        <dbReference type="UniProtKB" id="Q99LN9"/>
    </source>
</evidence>
<evidence type="ECO:0000250" key="2">
    <source>
        <dbReference type="UniProtKB" id="Q9BU89"/>
    </source>
</evidence>
<evidence type="ECO:0000255" key="3">
    <source>
        <dbReference type="HAMAP-Rule" id="MF_03101"/>
    </source>
</evidence>
<evidence type="ECO:0000256" key="4">
    <source>
        <dbReference type="SAM" id="MobiDB-lite"/>
    </source>
</evidence>
<gene>
    <name type="primary">dohh</name>
    <name type="ORF">zgc:56338</name>
</gene>
<organism>
    <name type="scientific">Danio rerio</name>
    <name type="common">Zebrafish</name>
    <name type="synonym">Brachydanio rerio</name>
    <dbReference type="NCBI Taxonomy" id="7955"/>
    <lineage>
        <taxon>Eukaryota</taxon>
        <taxon>Metazoa</taxon>
        <taxon>Chordata</taxon>
        <taxon>Craniata</taxon>
        <taxon>Vertebrata</taxon>
        <taxon>Euteleostomi</taxon>
        <taxon>Actinopterygii</taxon>
        <taxon>Neopterygii</taxon>
        <taxon>Teleostei</taxon>
        <taxon>Ostariophysi</taxon>
        <taxon>Cypriniformes</taxon>
        <taxon>Danionidae</taxon>
        <taxon>Danioninae</taxon>
        <taxon>Danio</taxon>
    </lineage>
</organism>
<protein>
    <recommendedName>
        <fullName evidence="3">Deoxyhypusine hydroxylase</fullName>
        <shortName evidence="3">DOHH</shortName>
        <ecNumber evidence="2 3">1.14.99.29</ecNumber>
    </recommendedName>
    <alternativeName>
        <fullName evidence="3">Deoxyhypusine dioxygenase</fullName>
    </alternativeName>
    <alternativeName>
        <fullName evidence="3">Deoxyhypusine monooxygenase</fullName>
    </alternativeName>
</protein>